<accession>P45320</accession>
<reference key="1">
    <citation type="journal article" date="1995" name="Science">
        <title>Whole-genome random sequencing and assembly of Haemophilus influenzae Rd.</title>
        <authorList>
            <person name="Fleischmann R.D."/>
            <person name="Adams M.D."/>
            <person name="White O."/>
            <person name="Clayton R.A."/>
            <person name="Kirkness E.F."/>
            <person name="Kerlavage A.R."/>
            <person name="Bult C.J."/>
            <person name="Tomb J.-F."/>
            <person name="Dougherty B.A."/>
            <person name="Merrick J.M."/>
            <person name="McKenney K."/>
            <person name="Sutton G.G."/>
            <person name="FitzHugh W."/>
            <person name="Fields C.A."/>
            <person name="Gocayne J.D."/>
            <person name="Scott J.D."/>
            <person name="Shirley R."/>
            <person name="Liu L.-I."/>
            <person name="Glodek A."/>
            <person name="Kelley J.M."/>
            <person name="Weidman J.F."/>
            <person name="Phillips C.A."/>
            <person name="Spriggs T."/>
            <person name="Hedblom E."/>
            <person name="Cotton M.D."/>
            <person name="Utterback T.R."/>
            <person name="Hanna M.C."/>
            <person name="Nguyen D.T."/>
            <person name="Saudek D.M."/>
            <person name="Brandon R.C."/>
            <person name="Fine L.D."/>
            <person name="Fritchman J.L."/>
            <person name="Fuhrmann J.L."/>
            <person name="Geoghagen N.S.M."/>
            <person name="Gnehm C.L."/>
            <person name="McDonald L.A."/>
            <person name="Small K.V."/>
            <person name="Fraser C.M."/>
            <person name="Smith H.O."/>
            <person name="Venter J.C."/>
        </authorList>
    </citation>
    <scope>NUCLEOTIDE SEQUENCE [LARGE SCALE GENOMIC DNA]</scope>
    <source>
        <strain>ATCC 51907 / DSM 11121 / KW20 / Rd</strain>
    </source>
</reference>
<feature type="chain" id="PRO_0000214819" description="Uncharacterized sodium-dependent transporter HI_1690">
    <location>
        <begin position="1"/>
        <end position="457"/>
    </location>
</feature>
<feature type="transmembrane region" description="Helical" evidence="1">
    <location>
        <begin position="18"/>
        <end position="38"/>
    </location>
</feature>
<feature type="transmembrane region" description="Helical" evidence="1">
    <location>
        <begin position="44"/>
        <end position="64"/>
    </location>
</feature>
<feature type="transmembrane region" description="Helical" evidence="1">
    <location>
        <begin position="101"/>
        <end position="121"/>
    </location>
</feature>
<feature type="transmembrane region" description="Helical" evidence="1">
    <location>
        <begin position="158"/>
        <end position="178"/>
    </location>
</feature>
<feature type="transmembrane region" description="Helical" evidence="1">
    <location>
        <begin position="188"/>
        <end position="208"/>
    </location>
</feature>
<feature type="transmembrane region" description="Helical" evidence="1">
    <location>
        <begin position="228"/>
        <end position="248"/>
    </location>
</feature>
<feature type="transmembrane region" description="Helical" evidence="1">
    <location>
        <begin position="273"/>
        <end position="293"/>
    </location>
</feature>
<feature type="transmembrane region" description="Helical" evidence="1">
    <location>
        <begin position="294"/>
        <end position="314"/>
    </location>
</feature>
<feature type="transmembrane region" description="Helical" evidence="1">
    <location>
        <begin position="316"/>
        <end position="336"/>
    </location>
</feature>
<feature type="transmembrane region" description="Helical" evidence="1">
    <location>
        <begin position="355"/>
        <end position="375"/>
    </location>
</feature>
<feature type="transmembrane region" description="Helical" evidence="1">
    <location>
        <begin position="396"/>
        <end position="416"/>
    </location>
</feature>
<feature type="transmembrane region" description="Helical" evidence="1">
    <location>
        <begin position="433"/>
        <end position="453"/>
    </location>
</feature>
<dbReference type="EMBL" id="L42023">
    <property type="protein sequence ID" value="AAC23336.1"/>
    <property type="molecule type" value="Genomic_DNA"/>
</dbReference>
<dbReference type="PIR" id="H64136">
    <property type="entry name" value="H64136"/>
</dbReference>
<dbReference type="RefSeq" id="NP_439832.1">
    <property type="nucleotide sequence ID" value="NC_000907.1"/>
</dbReference>
<dbReference type="SMR" id="P45320"/>
<dbReference type="EnsemblBacteria" id="AAC23336">
    <property type="protein sequence ID" value="AAC23336"/>
    <property type="gene ID" value="HI_1690"/>
</dbReference>
<dbReference type="KEGG" id="hin:HI_1690"/>
<dbReference type="PATRIC" id="fig|71421.8.peg.1769"/>
<dbReference type="eggNOG" id="COG0733">
    <property type="taxonomic scope" value="Bacteria"/>
</dbReference>
<dbReference type="HOGENOM" id="CLU_006855_3_4_6"/>
<dbReference type="OrthoDB" id="9762833at2"/>
<dbReference type="PhylomeDB" id="P45320"/>
<dbReference type="BioCyc" id="HINF71421:G1GJ1-1706-MONOMER"/>
<dbReference type="Proteomes" id="UP000000579">
    <property type="component" value="Chromosome"/>
</dbReference>
<dbReference type="GO" id="GO:0005886">
    <property type="term" value="C:plasma membrane"/>
    <property type="evidence" value="ECO:0007669"/>
    <property type="project" value="UniProtKB-SubCell"/>
</dbReference>
<dbReference type="GO" id="GO:0015293">
    <property type="term" value="F:symporter activity"/>
    <property type="evidence" value="ECO:0007669"/>
    <property type="project" value="UniProtKB-KW"/>
</dbReference>
<dbReference type="CDD" id="cd10336">
    <property type="entry name" value="SLC6sbd_Tyt1-Like"/>
    <property type="match status" value="1"/>
</dbReference>
<dbReference type="InterPro" id="IPR000175">
    <property type="entry name" value="Na/ntran_symport"/>
</dbReference>
<dbReference type="InterPro" id="IPR037272">
    <property type="entry name" value="SNS_sf"/>
</dbReference>
<dbReference type="InterPro" id="IPR047218">
    <property type="entry name" value="YocR/YhdH-like"/>
</dbReference>
<dbReference type="NCBIfam" id="NF037979">
    <property type="entry name" value="Na_transp"/>
    <property type="match status" value="1"/>
</dbReference>
<dbReference type="PANTHER" id="PTHR42948">
    <property type="entry name" value="TRANSPORTER"/>
    <property type="match status" value="1"/>
</dbReference>
<dbReference type="PANTHER" id="PTHR42948:SF1">
    <property type="entry name" value="TRANSPORTER"/>
    <property type="match status" value="1"/>
</dbReference>
<dbReference type="Pfam" id="PF00209">
    <property type="entry name" value="SNF"/>
    <property type="match status" value="2"/>
</dbReference>
<dbReference type="PRINTS" id="PR00176">
    <property type="entry name" value="NANEUSMPORT"/>
</dbReference>
<dbReference type="SUPFAM" id="SSF161070">
    <property type="entry name" value="SNF-like"/>
    <property type="match status" value="1"/>
</dbReference>
<dbReference type="PROSITE" id="PS00610">
    <property type="entry name" value="NA_NEUROTRAN_SYMP_1"/>
    <property type="match status" value="1"/>
</dbReference>
<dbReference type="PROSITE" id="PS50267">
    <property type="entry name" value="NA_NEUROTRAN_SYMP_3"/>
    <property type="match status" value="1"/>
</dbReference>
<organism>
    <name type="scientific">Haemophilus influenzae (strain ATCC 51907 / DSM 11121 / KW20 / Rd)</name>
    <dbReference type="NCBI Taxonomy" id="71421"/>
    <lineage>
        <taxon>Bacteria</taxon>
        <taxon>Pseudomonadati</taxon>
        <taxon>Pseudomonadota</taxon>
        <taxon>Gammaproteobacteria</taxon>
        <taxon>Pasteurellales</taxon>
        <taxon>Pasteurellaceae</taxon>
        <taxon>Haemophilus</taxon>
    </lineage>
</organism>
<proteinExistence type="inferred from homology"/>
<evidence type="ECO:0000255" key="1"/>
<evidence type="ECO:0000305" key="2"/>
<comment type="function">
    <text>Putative sodium-dependent transporter.</text>
</comment>
<comment type="subcellular location">
    <subcellularLocation>
        <location>Cell membrane</location>
        <topology>Multi-pass membrane protein</topology>
    </subcellularLocation>
</comment>
<comment type="similarity">
    <text evidence="2">Belongs to the sodium:neurotransmitter symporter (SNF) (TC 2.A.22) family.</text>
</comment>
<gene>
    <name type="ordered locus">HI_1690</name>
</gene>
<protein>
    <recommendedName>
        <fullName>Uncharacterized sodium-dependent transporter HI_1690</fullName>
    </recommendedName>
</protein>
<sequence>MTTNNKQRQTWSSRLTYVMTVAGATVGFGATWRFPYLVGENGGGAYVLLFCIAMIVIGIPMILVENVIGRRLRVNSIDAFGDKILDKGKGISKYWKILGYMGLLGAFGIMAYYMVLGGWVISYIISLISGTLDISTPITKDIAKNFYDLHIGNSPYEIIFYTLLFVIVNYIILAKGIIGGIERSVKYLMPLLFIFLIGMVIRNVTLPGAMEGITFYLKPDFSKITPQLFIFVLGQVFFALSLGFGVLITLSSYLNKEENLIHTAVITGFTNTIIAVLAGFMIFPSLFTFGIEPNAGPTLVFQSLPIVFSHLWAGKFFAIIFFGLLLIAALTTSITIYEVIITALQEKLRMCRGKAIVLTLSGIFLLGNIPAILGDNLWKNVTIFGKSIFDFYDYASGNILFMLTALGCAIFVGFVLKDEAKKELSSTKYSTFIKIWFNYVKFVVPLIILVIFISNLF</sequence>
<keyword id="KW-1003">Cell membrane</keyword>
<keyword id="KW-0472">Membrane</keyword>
<keyword id="KW-1185">Reference proteome</keyword>
<keyword id="KW-0769">Symport</keyword>
<keyword id="KW-0812">Transmembrane</keyword>
<keyword id="KW-1133">Transmembrane helix</keyword>
<keyword id="KW-0813">Transport</keyword>
<name>Y1690_HAEIN</name>